<protein>
    <recommendedName>
        <fullName evidence="1">Protein-methionine-sulfoxide reductase catalytic subunit MsrP</fullName>
        <ecNumber evidence="1">1.8.5.-</ecNumber>
    </recommendedName>
</protein>
<reference key="1">
    <citation type="journal article" date="2001" name="Nature">
        <title>Genome sequence of Yersinia pestis, the causative agent of plague.</title>
        <authorList>
            <person name="Parkhill J."/>
            <person name="Wren B.W."/>
            <person name="Thomson N.R."/>
            <person name="Titball R.W."/>
            <person name="Holden M.T.G."/>
            <person name="Prentice M.B."/>
            <person name="Sebaihia M."/>
            <person name="James K.D."/>
            <person name="Churcher C.M."/>
            <person name="Mungall K.L."/>
            <person name="Baker S."/>
            <person name="Basham D."/>
            <person name="Bentley S.D."/>
            <person name="Brooks K."/>
            <person name="Cerdeno-Tarraga A.-M."/>
            <person name="Chillingworth T."/>
            <person name="Cronin A."/>
            <person name="Davies R.M."/>
            <person name="Davis P."/>
            <person name="Dougan G."/>
            <person name="Feltwell T."/>
            <person name="Hamlin N."/>
            <person name="Holroyd S."/>
            <person name="Jagels K."/>
            <person name="Karlyshev A.V."/>
            <person name="Leather S."/>
            <person name="Moule S."/>
            <person name="Oyston P.C.F."/>
            <person name="Quail M.A."/>
            <person name="Rutherford K.M."/>
            <person name="Simmonds M."/>
            <person name="Skelton J."/>
            <person name="Stevens K."/>
            <person name="Whitehead S."/>
            <person name="Barrell B.G."/>
        </authorList>
    </citation>
    <scope>NUCLEOTIDE SEQUENCE [LARGE SCALE GENOMIC DNA]</scope>
    <source>
        <strain>CO-92 / Biovar Orientalis</strain>
    </source>
</reference>
<reference key="2">
    <citation type="journal article" date="2002" name="J. Bacteriol.">
        <title>Genome sequence of Yersinia pestis KIM.</title>
        <authorList>
            <person name="Deng W."/>
            <person name="Burland V."/>
            <person name="Plunkett G. III"/>
            <person name="Boutin A."/>
            <person name="Mayhew G.F."/>
            <person name="Liss P."/>
            <person name="Perna N.T."/>
            <person name="Rose D.J."/>
            <person name="Mau B."/>
            <person name="Zhou S."/>
            <person name="Schwartz D.C."/>
            <person name="Fetherston J.D."/>
            <person name="Lindler L.E."/>
            <person name="Brubaker R.R."/>
            <person name="Plano G.V."/>
            <person name="Straley S.C."/>
            <person name="McDonough K.A."/>
            <person name="Nilles M.L."/>
            <person name="Matson J.S."/>
            <person name="Blattner F.R."/>
            <person name="Perry R.D."/>
        </authorList>
    </citation>
    <scope>NUCLEOTIDE SEQUENCE [LARGE SCALE GENOMIC DNA]</scope>
    <source>
        <strain>KIM10+ / Biovar Mediaevalis</strain>
    </source>
</reference>
<reference key="3">
    <citation type="journal article" date="2004" name="DNA Res.">
        <title>Complete genome sequence of Yersinia pestis strain 91001, an isolate avirulent to humans.</title>
        <authorList>
            <person name="Song Y."/>
            <person name="Tong Z."/>
            <person name="Wang J."/>
            <person name="Wang L."/>
            <person name="Guo Z."/>
            <person name="Han Y."/>
            <person name="Zhang J."/>
            <person name="Pei D."/>
            <person name="Zhou D."/>
            <person name="Qin H."/>
            <person name="Pang X."/>
            <person name="Han Y."/>
            <person name="Zhai J."/>
            <person name="Li M."/>
            <person name="Cui B."/>
            <person name="Qi Z."/>
            <person name="Jin L."/>
            <person name="Dai R."/>
            <person name="Chen F."/>
            <person name="Li S."/>
            <person name="Ye C."/>
            <person name="Du Z."/>
            <person name="Lin W."/>
            <person name="Wang J."/>
            <person name="Yu J."/>
            <person name="Yang H."/>
            <person name="Wang J."/>
            <person name="Huang P."/>
            <person name="Yang R."/>
        </authorList>
    </citation>
    <scope>NUCLEOTIDE SEQUENCE [LARGE SCALE GENOMIC DNA]</scope>
    <source>
        <strain>91001 / Biovar Mediaevalis</strain>
    </source>
</reference>
<gene>
    <name evidence="1" type="primary">msrP</name>
    <name type="ordered locus">YPO3662</name>
    <name type="ordered locus">y0205</name>
    <name type="ordered locus">YP_3884</name>
</gene>
<comment type="function">
    <text evidence="1">Part of the MsrPQ system that repairs oxidized periplasmic proteins containing methionine sulfoxide residues (Met-O), using respiratory chain electrons. Thus protects these proteins from oxidative-stress damage caused by reactive species of oxygen and chlorine generated by the host defense mechanisms. MsrPQ is essential for the maintenance of envelope integrity under bleach stress, rescuing a wide series of structurally unrelated periplasmic proteins from methionine oxidation. The catalytic subunit MsrP is non-stereospecific, being able to reduce both (R-) and (S-) diastereoisomers of methionine sulfoxide.</text>
</comment>
<comment type="catalytic activity">
    <reaction evidence="1">
        <text>L-methionyl-[protein] + a quinone + H2O = L-methionyl-(S)-S-oxide-[protein] + a quinol</text>
        <dbReference type="Rhea" id="RHEA:51292"/>
        <dbReference type="Rhea" id="RHEA-COMP:12313"/>
        <dbReference type="Rhea" id="RHEA-COMP:12315"/>
        <dbReference type="ChEBI" id="CHEBI:15377"/>
        <dbReference type="ChEBI" id="CHEBI:16044"/>
        <dbReference type="ChEBI" id="CHEBI:24646"/>
        <dbReference type="ChEBI" id="CHEBI:44120"/>
        <dbReference type="ChEBI" id="CHEBI:132124"/>
    </reaction>
</comment>
<comment type="catalytic activity">
    <reaction evidence="1">
        <text>L-methionyl-[protein] + a quinone + H2O = L-methionyl-(R)-S-oxide-[protein] + a quinol</text>
        <dbReference type="Rhea" id="RHEA:51296"/>
        <dbReference type="Rhea" id="RHEA-COMP:12313"/>
        <dbReference type="Rhea" id="RHEA-COMP:12314"/>
        <dbReference type="ChEBI" id="CHEBI:15377"/>
        <dbReference type="ChEBI" id="CHEBI:16044"/>
        <dbReference type="ChEBI" id="CHEBI:24646"/>
        <dbReference type="ChEBI" id="CHEBI:45764"/>
        <dbReference type="ChEBI" id="CHEBI:132124"/>
    </reaction>
</comment>
<comment type="cofactor">
    <cofactor evidence="1">
        <name>Mo-molybdopterin</name>
        <dbReference type="ChEBI" id="CHEBI:71302"/>
    </cofactor>
    <text evidence="1">Binds 1 Mo-molybdopterin (Mo-MPT) cofactor per subunit.</text>
</comment>
<comment type="subunit">
    <text evidence="1">Heterodimer of a catalytic subunit (MsrP) and a heme-binding subunit (MsrQ).</text>
</comment>
<comment type="subcellular location">
    <subcellularLocation>
        <location evidence="1">Periplasm</location>
    </subcellularLocation>
    <text evidence="1">Is attached to the inner membrane when interacting with the MsrQ subunit.</text>
</comment>
<comment type="PTM">
    <text evidence="1">Predicted to be exported by the Tat system. The position of the signal peptide cleavage has not been experimentally proven.</text>
</comment>
<comment type="similarity">
    <text evidence="1">Belongs to the MsrP family.</text>
</comment>
<comment type="sequence caution" evidence="3">
    <conflict type="erroneous initiation">
        <sequence resource="EMBL-CDS" id="AAM83799"/>
    </conflict>
</comment>
<comment type="sequence caution" evidence="3">
    <conflict type="erroneous initiation">
        <sequence resource="EMBL-CDS" id="AAS64029"/>
    </conflict>
</comment>
<keyword id="KW-0479">Metal-binding</keyword>
<keyword id="KW-0500">Molybdenum</keyword>
<keyword id="KW-0560">Oxidoreductase</keyword>
<keyword id="KW-0574">Periplasm</keyword>
<keyword id="KW-1185">Reference proteome</keyword>
<keyword id="KW-0732">Signal</keyword>
<evidence type="ECO:0000255" key="1">
    <source>
        <dbReference type="HAMAP-Rule" id="MF_01206"/>
    </source>
</evidence>
<evidence type="ECO:0000256" key="2">
    <source>
        <dbReference type="SAM" id="MobiDB-lite"/>
    </source>
</evidence>
<evidence type="ECO:0000305" key="3"/>
<feature type="signal peptide" description="Tat-type signal" evidence="1">
    <location>
        <begin position="1"/>
        <end position="76"/>
    </location>
</feature>
<feature type="chain" id="PRO_0000070701" description="Protein-methionine-sulfoxide reductase catalytic subunit MsrP" evidence="1">
    <location>
        <begin position="77"/>
        <end position="366"/>
    </location>
</feature>
<feature type="region of interest" description="Disordered" evidence="2">
    <location>
        <begin position="1"/>
        <end position="40"/>
    </location>
</feature>
<feature type="compositionally biased region" description="Low complexity" evidence="2">
    <location>
        <begin position="1"/>
        <end position="22"/>
    </location>
</feature>
<feature type="compositionally biased region" description="Polar residues" evidence="2">
    <location>
        <begin position="23"/>
        <end position="33"/>
    </location>
</feature>
<feature type="binding site" evidence="1">
    <location>
        <position position="120"/>
    </location>
    <ligand>
        <name>Mo-molybdopterin</name>
        <dbReference type="ChEBI" id="CHEBI:71302"/>
    </ligand>
</feature>
<feature type="binding site" evidence="1">
    <location>
        <begin position="123"/>
        <end position="124"/>
    </location>
    <ligand>
        <name>Mo-molybdopterin</name>
        <dbReference type="ChEBI" id="CHEBI:71302"/>
    </ligand>
</feature>
<feature type="binding site" evidence="1">
    <location>
        <position position="178"/>
    </location>
    <ligand>
        <name>Mo-molybdopterin</name>
        <dbReference type="ChEBI" id="CHEBI:71302"/>
    </ligand>
    <ligandPart>
        <name>Mo</name>
        <dbReference type="ChEBI" id="CHEBI:28685"/>
    </ligandPart>
</feature>
<feature type="binding site" evidence="1">
    <location>
        <position position="213"/>
    </location>
    <ligand>
        <name>Mo-molybdopterin</name>
        <dbReference type="ChEBI" id="CHEBI:71302"/>
    </ligand>
</feature>
<feature type="binding site" evidence="1">
    <location>
        <position position="265"/>
    </location>
    <ligand>
        <name>Mo-molybdopterin</name>
        <dbReference type="ChEBI" id="CHEBI:71302"/>
    </ligand>
</feature>
<feature type="binding site" evidence="1">
    <location>
        <position position="270"/>
    </location>
    <ligand>
        <name>Mo-molybdopterin</name>
        <dbReference type="ChEBI" id="CHEBI:71302"/>
    </ligand>
</feature>
<feature type="binding site" evidence="1">
    <location>
        <begin position="281"/>
        <end position="283"/>
    </location>
    <ligand>
        <name>Mo-molybdopterin</name>
        <dbReference type="ChEBI" id="CHEBI:71302"/>
    </ligand>
</feature>
<name>MSRP_YERPE</name>
<organism>
    <name type="scientific">Yersinia pestis</name>
    <dbReference type="NCBI Taxonomy" id="632"/>
    <lineage>
        <taxon>Bacteria</taxon>
        <taxon>Pseudomonadati</taxon>
        <taxon>Pseudomonadota</taxon>
        <taxon>Gammaproteobacteria</taxon>
        <taxon>Enterobacterales</taxon>
        <taxon>Yersiniaceae</taxon>
        <taxon>Yersinia</taxon>
    </lineage>
</organism>
<sequence>MHNTFTHTKNNTHTKNNTQAKNSGSQTKSNAVSLNKPRKLTEADVTPESIFYQRRKVLQALGITAATLALPASAQADLLAWFKGNEPPKAPSGKPLTFTPSAAYHPDLALTPEDKVTGYNNFYEFGLDKADPAANAGTLKTEDWQIKIDGDVVKPMTLDMDYLMKCFPLEERIYRLRCVEAWSMVVPWIGFELGKLLKLAEPTSNARYVAFQTLYAPDQMPGQKNRFIGGGLDYPYVEGLRLDEAMHPLAFMVVGVYGKTLPPQNGAPLRLMTPWKYGFKSIKSIVHIRLTRDQPPTTWNLSAPNEYGFYANVNPHVDHPRWSQATERVIGSGGILDVKRQPTLLFNGYAEQVASLYRGLDLRKNF</sequence>
<accession>Q8ZAW9</accession>
<accession>Q0WAZ0</accession>
<proteinExistence type="inferred from homology"/>
<dbReference type="EC" id="1.8.5.-" evidence="1"/>
<dbReference type="EMBL" id="AL590842">
    <property type="protein sequence ID" value="CAL22251.1"/>
    <property type="molecule type" value="Genomic_DNA"/>
</dbReference>
<dbReference type="EMBL" id="AE009952">
    <property type="protein sequence ID" value="AAM83799.1"/>
    <property type="status" value="ALT_INIT"/>
    <property type="molecule type" value="Genomic_DNA"/>
</dbReference>
<dbReference type="EMBL" id="AE017042">
    <property type="protein sequence ID" value="AAS64029.1"/>
    <property type="status" value="ALT_INIT"/>
    <property type="molecule type" value="Genomic_DNA"/>
</dbReference>
<dbReference type="PIR" id="AH0445">
    <property type="entry name" value="AH0445"/>
</dbReference>
<dbReference type="RefSeq" id="WP_002210073.1">
    <property type="nucleotide sequence ID" value="NZ_WUCM01000059.1"/>
</dbReference>
<dbReference type="RefSeq" id="YP_002348548.1">
    <property type="nucleotide sequence ID" value="NC_003143.1"/>
</dbReference>
<dbReference type="SMR" id="Q8ZAW9"/>
<dbReference type="IntAct" id="Q8ZAW9">
    <property type="interactions" value="1"/>
</dbReference>
<dbReference type="STRING" id="214092.YPO3662"/>
<dbReference type="PaxDb" id="214092-YPO3662"/>
<dbReference type="DNASU" id="1145152"/>
<dbReference type="EnsemblBacteria" id="AAS64029">
    <property type="protein sequence ID" value="AAS64029"/>
    <property type="gene ID" value="YP_3884"/>
</dbReference>
<dbReference type="GeneID" id="57975087"/>
<dbReference type="KEGG" id="ype:YPO3662"/>
<dbReference type="KEGG" id="ypk:y0205"/>
<dbReference type="KEGG" id="ypm:YP_3884"/>
<dbReference type="PATRIC" id="fig|214092.21.peg.4167"/>
<dbReference type="eggNOG" id="COG2041">
    <property type="taxonomic scope" value="Bacteria"/>
</dbReference>
<dbReference type="HOGENOM" id="CLU_045520_0_0_6"/>
<dbReference type="OMA" id="DWPYVEG"/>
<dbReference type="OrthoDB" id="9795587at2"/>
<dbReference type="Proteomes" id="UP000000815">
    <property type="component" value="Chromosome"/>
</dbReference>
<dbReference type="Proteomes" id="UP000001019">
    <property type="component" value="Chromosome"/>
</dbReference>
<dbReference type="Proteomes" id="UP000002490">
    <property type="component" value="Chromosome"/>
</dbReference>
<dbReference type="GO" id="GO:0042597">
    <property type="term" value="C:periplasmic space"/>
    <property type="evidence" value="ECO:0007669"/>
    <property type="project" value="UniProtKB-SubCell"/>
</dbReference>
<dbReference type="GO" id="GO:0046872">
    <property type="term" value="F:metal ion binding"/>
    <property type="evidence" value="ECO:0007669"/>
    <property type="project" value="UniProtKB-KW"/>
</dbReference>
<dbReference type="GO" id="GO:0043546">
    <property type="term" value="F:molybdopterin cofactor binding"/>
    <property type="evidence" value="ECO:0007669"/>
    <property type="project" value="UniProtKB-UniRule"/>
</dbReference>
<dbReference type="GO" id="GO:0016672">
    <property type="term" value="F:oxidoreductase activity, acting on a sulfur group of donors, quinone or similar compound as acceptor"/>
    <property type="evidence" value="ECO:0007669"/>
    <property type="project" value="UniProtKB-UniRule"/>
</dbReference>
<dbReference type="GO" id="GO:0030091">
    <property type="term" value="P:protein repair"/>
    <property type="evidence" value="ECO:0007669"/>
    <property type="project" value="UniProtKB-UniRule"/>
</dbReference>
<dbReference type="CDD" id="cd02107">
    <property type="entry name" value="YedY_like_Moco"/>
    <property type="match status" value="1"/>
</dbReference>
<dbReference type="Gene3D" id="3.90.420.10">
    <property type="entry name" value="Oxidoreductase, molybdopterin-binding domain"/>
    <property type="match status" value="1"/>
</dbReference>
<dbReference type="HAMAP" id="MF_01206">
    <property type="entry name" value="MsrP"/>
    <property type="match status" value="1"/>
</dbReference>
<dbReference type="InterPro" id="IPR022867">
    <property type="entry name" value="MsrP"/>
</dbReference>
<dbReference type="InterPro" id="IPR000572">
    <property type="entry name" value="OxRdtase_Mopterin-bd_dom"/>
</dbReference>
<dbReference type="InterPro" id="IPR036374">
    <property type="entry name" value="OxRdtase_Mopterin-bd_sf"/>
</dbReference>
<dbReference type="NCBIfam" id="NF003767">
    <property type="entry name" value="PRK05363.1"/>
    <property type="match status" value="1"/>
</dbReference>
<dbReference type="PANTHER" id="PTHR43032">
    <property type="entry name" value="PROTEIN-METHIONINE-SULFOXIDE REDUCTASE"/>
    <property type="match status" value="1"/>
</dbReference>
<dbReference type="PANTHER" id="PTHR43032:SF3">
    <property type="entry name" value="PROTEIN-METHIONINE-SULFOXIDE REDUCTASE CATALYTIC SUBUNIT MSRP"/>
    <property type="match status" value="1"/>
</dbReference>
<dbReference type="Pfam" id="PF00174">
    <property type="entry name" value="Oxidored_molyb"/>
    <property type="match status" value="1"/>
</dbReference>
<dbReference type="SUPFAM" id="SSF56524">
    <property type="entry name" value="Oxidoreductase molybdopterin-binding domain"/>
    <property type="match status" value="1"/>
</dbReference>